<keyword id="KW-1003">Cell membrane</keyword>
<keyword id="KW-0472">Membrane</keyword>
<keyword id="KW-1185">Reference proteome</keyword>
<keyword id="KW-0812">Transmembrane</keyword>
<keyword id="KW-1133">Transmembrane helix</keyword>
<keyword id="KW-0813">Transport</keyword>
<evidence type="ECO:0000255" key="1"/>
<evidence type="ECO:0000305" key="2"/>
<proteinExistence type="inferred from homology"/>
<gene>
    <name type="primary">yvdR</name>
    <name type="ordered locus">BSU34500</name>
</gene>
<sequence length="106" mass="11426">MAWFLLVIAGIEEIIAAIAMKYIDGTRKKWPIIVMTVGFGLSFYCLSQAMIVLPAGVAYAVWTGIGSIGVSAVGLIWFKERFQLSQVISLCLILAGVIGLRLTSSS</sequence>
<name>YVDR_BACSU</name>
<dbReference type="EMBL" id="Z94043">
    <property type="protein sequence ID" value="CAB08047.1"/>
    <property type="molecule type" value="Genomic_DNA"/>
</dbReference>
<dbReference type="EMBL" id="AL009126">
    <property type="protein sequence ID" value="CAB15455.1"/>
    <property type="molecule type" value="Genomic_DNA"/>
</dbReference>
<dbReference type="PIR" id="A70035">
    <property type="entry name" value="A70035"/>
</dbReference>
<dbReference type="RefSeq" id="WP_003228222.1">
    <property type="nucleotide sequence ID" value="NZ_OZ025638.1"/>
</dbReference>
<dbReference type="SMR" id="O06999"/>
<dbReference type="FunCoup" id="O06999">
    <property type="interactions" value="48"/>
</dbReference>
<dbReference type="STRING" id="224308.BSU34500"/>
<dbReference type="PaxDb" id="224308-BSU34500"/>
<dbReference type="DNASU" id="938613"/>
<dbReference type="EnsemblBacteria" id="CAB15455">
    <property type="protein sequence ID" value="CAB15455"/>
    <property type="gene ID" value="BSU_34500"/>
</dbReference>
<dbReference type="GeneID" id="938613"/>
<dbReference type="KEGG" id="bsu:BSU34500"/>
<dbReference type="PATRIC" id="fig|224308.179.peg.3737"/>
<dbReference type="eggNOG" id="COG2076">
    <property type="taxonomic scope" value="Bacteria"/>
</dbReference>
<dbReference type="InParanoid" id="O06999"/>
<dbReference type="OrthoDB" id="21828at2"/>
<dbReference type="PhylomeDB" id="O06999"/>
<dbReference type="BioCyc" id="BSUB:BSU34500-MONOMER"/>
<dbReference type="Proteomes" id="UP000001570">
    <property type="component" value="Chromosome"/>
</dbReference>
<dbReference type="GO" id="GO:0005886">
    <property type="term" value="C:plasma membrane"/>
    <property type="evidence" value="ECO:0000318"/>
    <property type="project" value="GO_Central"/>
</dbReference>
<dbReference type="GO" id="GO:0022857">
    <property type="term" value="F:transmembrane transporter activity"/>
    <property type="evidence" value="ECO:0000318"/>
    <property type="project" value="GO_Central"/>
</dbReference>
<dbReference type="GO" id="GO:0055085">
    <property type="term" value="P:transmembrane transport"/>
    <property type="evidence" value="ECO:0000318"/>
    <property type="project" value="GO_Central"/>
</dbReference>
<dbReference type="FunFam" id="1.10.3730.20:FF:000001">
    <property type="entry name" value="Quaternary ammonium compound resistance transporter SugE"/>
    <property type="match status" value="1"/>
</dbReference>
<dbReference type="Gene3D" id="1.10.3730.20">
    <property type="match status" value="1"/>
</dbReference>
<dbReference type="InterPro" id="IPR000390">
    <property type="entry name" value="Small_drug/metabolite_transptr"/>
</dbReference>
<dbReference type="InterPro" id="IPR045324">
    <property type="entry name" value="Small_multidrug_res"/>
</dbReference>
<dbReference type="PANTHER" id="PTHR30561:SF0">
    <property type="entry name" value="GUANIDINIUM EXPORTER"/>
    <property type="match status" value="1"/>
</dbReference>
<dbReference type="PANTHER" id="PTHR30561">
    <property type="entry name" value="SMR FAMILY PROTON-DEPENDENT DRUG EFFLUX TRANSPORTER SUGE"/>
    <property type="match status" value="1"/>
</dbReference>
<dbReference type="Pfam" id="PF00893">
    <property type="entry name" value="Multi_Drug_Res"/>
    <property type="match status" value="1"/>
</dbReference>
<dbReference type="SUPFAM" id="SSF103481">
    <property type="entry name" value="Multidrug resistance efflux transporter EmrE"/>
    <property type="match status" value="1"/>
</dbReference>
<accession>O06999</accession>
<feature type="chain" id="PRO_0000108115" description="Uncharacterized membrane protein YvdR">
    <location>
        <begin position="1"/>
        <end position="106"/>
    </location>
</feature>
<feature type="transmembrane region" description="Helical" evidence="1">
    <location>
        <begin position="3"/>
        <end position="23"/>
    </location>
</feature>
<feature type="transmembrane region" description="Helical" evidence="1">
    <location>
        <begin position="29"/>
        <end position="49"/>
    </location>
</feature>
<feature type="transmembrane region" description="Helical" evidence="1">
    <location>
        <begin position="50"/>
        <end position="70"/>
    </location>
</feature>
<feature type="transmembrane region" description="Helical" evidence="1">
    <location>
        <begin position="82"/>
        <end position="102"/>
    </location>
</feature>
<reference key="1">
    <citation type="submission" date="1997-04" db="EMBL/GenBank/DDBJ databases">
        <authorList>
            <person name="Denizot F."/>
        </authorList>
    </citation>
    <scope>NUCLEOTIDE SEQUENCE [GENOMIC DNA]</scope>
    <source>
        <strain>168</strain>
    </source>
</reference>
<reference key="2">
    <citation type="journal article" date="1997" name="Nature">
        <title>The complete genome sequence of the Gram-positive bacterium Bacillus subtilis.</title>
        <authorList>
            <person name="Kunst F."/>
            <person name="Ogasawara N."/>
            <person name="Moszer I."/>
            <person name="Albertini A.M."/>
            <person name="Alloni G."/>
            <person name="Azevedo V."/>
            <person name="Bertero M.G."/>
            <person name="Bessieres P."/>
            <person name="Bolotin A."/>
            <person name="Borchert S."/>
            <person name="Borriss R."/>
            <person name="Boursier L."/>
            <person name="Brans A."/>
            <person name="Braun M."/>
            <person name="Brignell S.C."/>
            <person name="Bron S."/>
            <person name="Brouillet S."/>
            <person name="Bruschi C.V."/>
            <person name="Caldwell B."/>
            <person name="Capuano V."/>
            <person name="Carter N.M."/>
            <person name="Choi S.-K."/>
            <person name="Codani J.-J."/>
            <person name="Connerton I.F."/>
            <person name="Cummings N.J."/>
            <person name="Daniel R.A."/>
            <person name="Denizot F."/>
            <person name="Devine K.M."/>
            <person name="Duesterhoeft A."/>
            <person name="Ehrlich S.D."/>
            <person name="Emmerson P.T."/>
            <person name="Entian K.-D."/>
            <person name="Errington J."/>
            <person name="Fabret C."/>
            <person name="Ferrari E."/>
            <person name="Foulger D."/>
            <person name="Fritz C."/>
            <person name="Fujita M."/>
            <person name="Fujita Y."/>
            <person name="Fuma S."/>
            <person name="Galizzi A."/>
            <person name="Galleron N."/>
            <person name="Ghim S.-Y."/>
            <person name="Glaser P."/>
            <person name="Goffeau A."/>
            <person name="Golightly E.J."/>
            <person name="Grandi G."/>
            <person name="Guiseppi G."/>
            <person name="Guy B.J."/>
            <person name="Haga K."/>
            <person name="Haiech J."/>
            <person name="Harwood C.R."/>
            <person name="Henaut A."/>
            <person name="Hilbert H."/>
            <person name="Holsappel S."/>
            <person name="Hosono S."/>
            <person name="Hullo M.-F."/>
            <person name="Itaya M."/>
            <person name="Jones L.-M."/>
            <person name="Joris B."/>
            <person name="Karamata D."/>
            <person name="Kasahara Y."/>
            <person name="Klaerr-Blanchard M."/>
            <person name="Klein C."/>
            <person name="Kobayashi Y."/>
            <person name="Koetter P."/>
            <person name="Koningstein G."/>
            <person name="Krogh S."/>
            <person name="Kumano M."/>
            <person name="Kurita K."/>
            <person name="Lapidus A."/>
            <person name="Lardinois S."/>
            <person name="Lauber J."/>
            <person name="Lazarevic V."/>
            <person name="Lee S.-M."/>
            <person name="Levine A."/>
            <person name="Liu H."/>
            <person name="Masuda S."/>
            <person name="Mauel C."/>
            <person name="Medigue C."/>
            <person name="Medina N."/>
            <person name="Mellado R.P."/>
            <person name="Mizuno M."/>
            <person name="Moestl D."/>
            <person name="Nakai S."/>
            <person name="Noback M."/>
            <person name="Noone D."/>
            <person name="O'Reilly M."/>
            <person name="Ogawa K."/>
            <person name="Ogiwara A."/>
            <person name="Oudega B."/>
            <person name="Park S.-H."/>
            <person name="Parro V."/>
            <person name="Pohl T.M."/>
            <person name="Portetelle D."/>
            <person name="Porwollik S."/>
            <person name="Prescott A.M."/>
            <person name="Presecan E."/>
            <person name="Pujic P."/>
            <person name="Purnelle B."/>
            <person name="Rapoport G."/>
            <person name="Rey M."/>
            <person name="Reynolds S."/>
            <person name="Rieger M."/>
            <person name="Rivolta C."/>
            <person name="Rocha E."/>
            <person name="Roche B."/>
            <person name="Rose M."/>
            <person name="Sadaie Y."/>
            <person name="Sato T."/>
            <person name="Scanlan E."/>
            <person name="Schleich S."/>
            <person name="Schroeter R."/>
            <person name="Scoffone F."/>
            <person name="Sekiguchi J."/>
            <person name="Sekowska A."/>
            <person name="Seror S.J."/>
            <person name="Serror P."/>
            <person name="Shin B.-S."/>
            <person name="Soldo B."/>
            <person name="Sorokin A."/>
            <person name="Tacconi E."/>
            <person name="Takagi T."/>
            <person name="Takahashi H."/>
            <person name="Takemaru K."/>
            <person name="Takeuchi M."/>
            <person name="Tamakoshi A."/>
            <person name="Tanaka T."/>
            <person name="Terpstra P."/>
            <person name="Tognoni A."/>
            <person name="Tosato V."/>
            <person name="Uchiyama S."/>
            <person name="Vandenbol M."/>
            <person name="Vannier F."/>
            <person name="Vassarotti A."/>
            <person name="Viari A."/>
            <person name="Wambutt R."/>
            <person name="Wedler E."/>
            <person name="Wedler H."/>
            <person name="Weitzenegger T."/>
            <person name="Winters P."/>
            <person name="Wipat A."/>
            <person name="Yamamoto H."/>
            <person name="Yamane K."/>
            <person name="Yasumoto K."/>
            <person name="Yata K."/>
            <person name="Yoshida K."/>
            <person name="Yoshikawa H.-F."/>
            <person name="Zumstein E."/>
            <person name="Yoshikawa H."/>
            <person name="Danchin A."/>
        </authorList>
    </citation>
    <scope>NUCLEOTIDE SEQUENCE [LARGE SCALE GENOMIC DNA]</scope>
    <source>
        <strain>168</strain>
    </source>
</reference>
<organism>
    <name type="scientific">Bacillus subtilis (strain 168)</name>
    <dbReference type="NCBI Taxonomy" id="224308"/>
    <lineage>
        <taxon>Bacteria</taxon>
        <taxon>Bacillati</taxon>
        <taxon>Bacillota</taxon>
        <taxon>Bacilli</taxon>
        <taxon>Bacillales</taxon>
        <taxon>Bacillaceae</taxon>
        <taxon>Bacillus</taxon>
    </lineage>
</organism>
<comment type="subcellular location">
    <subcellularLocation>
        <location evidence="2">Cell membrane</location>
        <topology evidence="2">Multi-pass membrane protein</topology>
    </subcellularLocation>
</comment>
<comment type="similarity">
    <text evidence="2">Belongs to the drug/metabolite transporter (DMT) superfamily. Small multidrug resistance (SMR) (TC 2.A.7.1) family.</text>
</comment>
<protein>
    <recommendedName>
        <fullName>Uncharacterized membrane protein YvdR</fullName>
    </recommendedName>
</protein>